<evidence type="ECO:0000305" key="1"/>
<dbReference type="EMBL" id="U41267">
    <property type="protein sequence ID" value="AAC44153.1"/>
    <property type="molecule type" value="Genomic_DNA"/>
</dbReference>
<dbReference type="EMBL" id="AE004091">
    <property type="protein sequence ID" value="AAG07195.1"/>
    <property type="molecule type" value="Genomic_DNA"/>
</dbReference>
<dbReference type="PIR" id="S77592">
    <property type="entry name" value="S77592"/>
</dbReference>
<dbReference type="RefSeq" id="NP_252497.1">
    <property type="nucleotide sequence ID" value="NC_002516.2"/>
</dbReference>
<dbReference type="SMR" id="Q51384"/>
<dbReference type="FunCoup" id="Q51384">
    <property type="interactions" value="17"/>
</dbReference>
<dbReference type="STRING" id="208964.PA3808"/>
<dbReference type="PaxDb" id="208964-PA3808"/>
<dbReference type="GeneID" id="879893"/>
<dbReference type="KEGG" id="pae:PA3808"/>
<dbReference type="PATRIC" id="fig|208964.12.peg.3987"/>
<dbReference type="PseudoCAP" id="PA3808"/>
<dbReference type="HOGENOM" id="CLU_168040_1_0_6"/>
<dbReference type="InParanoid" id="Q51384"/>
<dbReference type="OrthoDB" id="9800346at2"/>
<dbReference type="PhylomeDB" id="Q51384"/>
<dbReference type="BioCyc" id="PAER208964:G1FZ6-3879-MONOMER"/>
<dbReference type="Proteomes" id="UP000002438">
    <property type="component" value="Chromosome"/>
</dbReference>
<dbReference type="GO" id="GO:0005829">
    <property type="term" value="C:cytosol"/>
    <property type="evidence" value="ECO:0000318"/>
    <property type="project" value="GO_Central"/>
</dbReference>
<dbReference type="GO" id="GO:0008198">
    <property type="term" value="F:ferrous iron binding"/>
    <property type="evidence" value="ECO:0000318"/>
    <property type="project" value="GO_Central"/>
</dbReference>
<dbReference type="GO" id="GO:0016226">
    <property type="term" value="P:iron-sulfur cluster assembly"/>
    <property type="evidence" value="ECO:0007669"/>
    <property type="project" value="InterPro"/>
</dbReference>
<dbReference type="FunFam" id="1.10.10.600:FF:000001">
    <property type="entry name" value="Fe-S assembly protein IscX"/>
    <property type="match status" value="1"/>
</dbReference>
<dbReference type="Gene3D" id="1.10.10.600">
    <property type="entry name" value="IscX-like"/>
    <property type="match status" value="1"/>
</dbReference>
<dbReference type="InterPro" id="IPR007479">
    <property type="entry name" value="ISC_FeS_clus_asmbl_IscsX"/>
</dbReference>
<dbReference type="InterPro" id="IPR036762">
    <property type="entry name" value="IscX-like_sf"/>
</dbReference>
<dbReference type="NCBIfam" id="TIGR03412">
    <property type="entry name" value="iscX_yfhJ"/>
    <property type="match status" value="1"/>
</dbReference>
<dbReference type="PANTHER" id="PTHR37532">
    <property type="entry name" value="PROTEIN ISCX"/>
    <property type="match status" value="1"/>
</dbReference>
<dbReference type="PANTHER" id="PTHR37532:SF1">
    <property type="entry name" value="PROTEIN ISCX"/>
    <property type="match status" value="1"/>
</dbReference>
<dbReference type="Pfam" id="PF04384">
    <property type="entry name" value="Fe-S_assembly"/>
    <property type="match status" value="1"/>
</dbReference>
<dbReference type="PIRSF" id="PIRSF039003">
    <property type="entry name" value="IscX"/>
    <property type="match status" value="1"/>
</dbReference>
<dbReference type="SUPFAM" id="SSF140319">
    <property type="entry name" value="IscX-like"/>
    <property type="match status" value="1"/>
</dbReference>
<reference key="1">
    <citation type="journal article" date="1996" name="Mol. Microbiol.">
        <title>Nucleoside diphosphate kinase from Pseudomonas aeruginosa: characterization of the gene and its role in cellular growth and exopolysaccharide alginate synthesis.</title>
        <authorList>
            <person name="Sundin G.W."/>
            <person name="Shankar S."/>
            <person name="Chugani S.A."/>
            <person name="Chopade B."/>
            <person name="Kavanaugh-Black A."/>
            <person name="Chakrabarty A.M."/>
        </authorList>
    </citation>
    <scope>NUCLEOTIDE SEQUENCE [GENOMIC DNA]</scope>
    <source>
        <strain>8822</strain>
    </source>
</reference>
<reference key="2">
    <citation type="journal article" date="2000" name="Nature">
        <title>Complete genome sequence of Pseudomonas aeruginosa PAO1, an opportunistic pathogen.</title>
        <authorList>
            <person name="Stover C.K."/>
            <person name="Pham X.-Q.T."/>
            <person name="Erwin A.L."/>
            <person name="Mizoguchi S.D."/>
            <person name="Warrener P."/>
            <person name="Hickey M.J."/>
            <person name="Brinkman F.S.L."/>
            <person name="Hufnagle W.O."/>
            <person name="Kowalik D.J."/>
            <person name="Lagrou M."/>
            <person name="Garber R.L."/>
            <person name="Goltry L."/>
            <person name="Tolentino E."/>
            <person name="Westbrock-Wadman S."/>
            <person name="Yuan Y."/>
            <person name="Brody L.L."/>
            <person name="Coulter S.N."/>
            <person name="Folger K.R."/>
            <person name="Kas A."/>
            <person name="Larbig K."/>
            <person name="Lim R.M."/>
            <person name="Smith K.A."/>
            <person name="Spencer D.H."/>
            <person name="Wong G.K.-S."/>
            <person name="Wu Z."/>
            <person name="Paulsen I.T."/>
            <person name="Reizer J."/>
            <person name="Saier M.H. Jr."/>
            <person name="Hancock R.E.W."/>
            <person name="Lory S."/>
            <person name="Olson M.V."/>
        </authorList>
    </citation>
    <scope>NUCLEOTIDE SEQUENCE [LARGE SCALE GENOMIC DNA]</scope>
    <source>
        <strain>ATCC 15692 / DSM 22644 / CIP 104116 / JCM 14847 / LMG 12228 / 1C / PRS 101 / PAO1</strain>
    </source>
</reference>
<protein>
    <recommendedName>
        <fullName>Uncharacterized protein PA3808</fullName>
    </recommendedName>
</protein>
<comment type="similarity">
    <text evidence="1">To E.coli YfhJ.</text>
</comment>
<proteinExistence type="predicted"/>
<sequence length="66" mass="7802">MSLKWTDVLEIAIQLDESKPEVDPRYVNFVDLRRWVVELPEFSDDPQRSGEKVLEAIQAAWIEERD</sequence>
<name>Y3808_PSEAE</name>
<accession>Q51384</accession>
<feature type="chain" id="PRO_0000169256" description="Uncharacterized protein PA3808">
    <location>
        <begin position="1"/>
        <end position="66"/>
    </location>
</feature>
<gene>
    <name type="ordered locus">PA3808</name>
</gene>
<organism>
    <name type="scientific">Pseudomonas aeruginosa (strain ATCC 15692 / DSM 22644 / CIP 104116 / JCM 14847 / LMG 12228 / 1C / PRS 101 / PAO1)</name>
    <dbReference type="NCBI Taxonomy" id="208964"/>
    <lineage>
        <taxon>Bacteria</taxon>
        <taxon>Pseudomonadati</taxon>
        <taxon>Pseudomonadota</taxon>
        <taxon>Gammaproteobacteria</taxon>
        <taxon>Pseudomonadales</taxon>
        <taxon>Pseudomonadaceae</taxon>
        <taxon>Pseudomonas</taxon>
    </lineage>
</organism>
<keyword id="KW-1185">Reference proteome</keyword>